<feature type="chain" id="PRO_0000331574" description="Tripartite motif-containing protein 64">
    <location>
        <begin position="1"/>
        <end position="449"/>
    </location>
</feature>
<feature type="domain" description="B30.2/SPRY" evidence="4">
    <location>
        <begin position="269"/>
        <end position="449"/>
    </location>
</feature>
<feature type="zinc finger region" description="RING-type" evidence="3">
    <location>
        <begin position="15"/>
        <end position="56"/>
    </location>
</feature>
<feature type="zinc finger region" description="B box-type" evidence="2">
    <location>
        <begin position="87"/>
        <end position="128"/>
    </location>
</feature>
<feature type="coiled-coil region" evidence="1">
    <location>
        <begin position="189"/>
        <end position="225"/>
    </location>
</feature>
<feature type="binding site" evidence="2">
    <location>
        <position position="92"/>
    </location>
    <ligand>
        <name>Zn(2+)</name>
        <dbReference type="ChEBI" id="CHEBI:29105"/>
    </ligand>
</feature>
<feature type="binding site" evidence="2">
    <location>
        <position position="95"/>
    </location>
    <ligand>
        <name>Zn(2+)</name>
        <dbReference type="ChEBI" id="CHEBI:29105"/>
    </ligand>
</feature>
<feature type="binding site" evidence="2">
    <location>
        <position position="114"/>
    </location>
    <ligand>
        <name>Zn(2+)</name>
        <dbReference type="ChEBI" id="CHEBI:29105"/>
    </ligand>
</feature>
<feature type="binding site" evidence="2">
    <location>
        <position position="120"/>
    </location>
    <ligand>
        <name>Zn(2+)</name>
        <dbReference type="ChEBI" id="CHEBI:29105"/>
    </ligand>
</feature>
<reference key="1">
    <citation type="journal article" date="2006" name="Nature">
        <title>Human chromosome 11 DNA sequence and analysis including novel gene identification.</title>
        <authorList>
            <person name="Taylor T.D."/>
            <person name="Noguchi H."/>
            <person name="Totoki Y."/>
            <person name="Toyoda A."/>
            <person name="Kuroki Y."/>
            <person name="Dewar K."/>
            <person name="Lloyd C."/>
            <person name="Itoh T."/>
            <person name="Takeda T."/>
            <person name="Kim D.-W."/>
            <person name="She X."/>
            <person name="Barlow K.F."/>
            <person name="Bloom T."/>
            <person name="Bruford E."/>
            <person name="Chang J.L."/>
            <person name="Cuomo C.A."/>
            <person name="Eichler E."/>
            <person name="FitzGerald M.G."/>
            <person name="Jaffe D.B."/>
            <person name="LaButti K."/>
            <person name="Nicol R."/>
            <person name="Park H.-S."/>
            <person name="Seaman C."/>
            <person name="Sougnez C."/>
            <person name="Yang X."/>
            <person name="Zimmer A.R."/>
            <person name="Zody M.C."/>
            <person name="Birren B.W."/>
            <person name="Nusbaum C."/>
            <person name="Fujiyama A."/>
            <person name="Hattori M."/>
            <person name="Rogers J."/>
            <person name="Lander E.S."/>
            <person name="Sakaki Y."/>
        </authorList>
    </citation>
    <scope>NUCLEOTIDE SEQUENCE [LARGE SCALE GENOMIC DNA]</scope>
</reference>
<reference key="2">
    <citation type="submission" date="2003-03" db="EMBL/GenBank/DDBJ databases">
        <title>Cloning of human full open reading frames in Gateway(TM) system entry vector (pDONR201).</title>
        <authorList>
            <person name="Ebert L."/>
            <person name="Heil O."/>
            <person name="Hennig S."/>
            <person name="Neubert P."/>
            <person name="Partsch E."/>
            <person name="Peters M."/>
            <person name="Radelof U."/>
            <person name="Schneider D."/>
            <person name="Korn B."/>
        </authorList>
    </citation>
    <scope>NUCLEOTIDE SEQUENCE [LARGE SCALE MRNA] OF 249-449</scope>
</reference>
<organism>
    <name type="scientific">Homo sapiens</name>
    <name type="common">Human</name>
    <dbReference type="NCBI Taxonomy" id="9606"/>
    <lineage>
        <taxon>Eukaryota</taxon>
        <taxon>Metazoa</taxon>
        <taxon>Chordata</taxon>
        <taxon>Craniata</taxon>
        <taxon>Vertebrata</taxon>
        <taxon>Euteleostomi</taxon>
        <taxon>Mammalia</taxon>
        <taxon>Eutheria</taxon>
        <taxon>Euarchontoglires</taxon>
        <taxon>Primates</taxon>
        <taxon>Haplorrhini</taxon>
        <taxon>Catarrhini</taxon>
        <taxon>Hominidae</taxon>
        <taxon>Homo</taxon>
    </lineage>
</organism>
<proteinExistence type="evidence at transcript level"/>
<comment type="similarity">
    <text evidence="5">Belongs to the TRIM/RBCC family.</text>
</comment>
<sequence>MDSDDLQVFQNELICCICVNYFIDPVTIDCGHSFCRPCLCLCSEEGRAPMRCPSCRKISEKPNFNTNVVLKKLSSLARQTRPQNINSSDNICVLHEETKELFCEADKRLLCGPCSESPEHMAHSHSPIGWAAEECREKLIKEMDYLWEINQETRNNLNQETRTFHSLKDYVSVRKRIITIQYQKMPIFLDEEEQRHLQALEREAEELFQQLQDSQVRMTQHLERMKDMYRELWETCHVPDVELLQDVRNVSARTDLAQMQKPQPVNPELTSWCITGVLDMLNNFRVDSALSTEMIPCYISLSEDVRYVIFGDDHLSAPTDPQGVDSFAVWGAQAFTSGKHYWEVDVTLSSNWILGVCQDSRTADANFVIDSDERFFLISSKRSNHYSLSTNSPPLIQYVQRPLGQVGVFLDYDNGSVSFFDVSKGSLIYGFPPSSFSSPLRPFFCFGCT</sequence>
<accession>A6NGJ6</accession>
<dbReference type="EMBL" id="AP004607">
    <property type="status" value="NOT_ANNOTATED_CDS"/>
    <property type="molecule type" value="Genomic_DNA"/>
</dbReference>
<dbReference type="EMBL" id="BX093574">
    <property type="status" value="NOT_ANNOTATED_CDS"/>
    <property type="molecule type" value="mRNA"/>
</dbReference>
<dbReference type="CCDS" id="CCDS73363.1"/>
<dbReference type="RefSeq" id="NP_001129958.1">
    <property type="nucleotide sequence ID" value="NM_001136486.2"/>
</dbReference>
<dbReference type="RefSeq" id="XP_011540887.1">
    <property type="nucleotide sequence ID" value="XM_011542585.2"/>
</dbReference>
<dbReference type="SMR" id="A6NGJ6"/>
<dbReference type="BioGRID" id="125673">
    <property type="interactions" value="9"/>
</dbReference>
<dbReference type="FunCoup" id="A6NGJ6">
    <property type="interactions" value="13"/>
</dbReference>
<dbReference type="STRING" id="9606.ENSP00000483764"/>
<dbReference type="iPTMnet" id="A6NGJ6"/>
<dbReference type="PhosphoSitePlus" id="A6NGJ6"/>
<dbReference type="BioMuta" id="TRIM64"/>
<dbReference type="PaxDb" id="9606-ENSP00000483764"/>
<dbReference type="PeptideAtlas" id="A6NGJ6"/>
<dbReference type="Antibodypedia" id="72942">
    <property type="antibodies" value="61 antibodies from 13 providers"/>
</dbReference>
<dbReference type="DNASU" id="120146"/>
<dbReference type="Ensembl" id="ENST00000533122.4">
    <property type="protein sequence ID" value="ENSP00000483764.1"/>
    <property type="gene ID" value="ENSG00000204450.9"/>
</dbReference>
<dbReference type="GeneID" id="120146"/>
<dbReference type="KEGG" id="hsa:120146"/>
<dbReference type="MANE-Select" id="ENST00000533122.4">
    <property type="protein sequence ID" value="ENSP00000483764.1"/>
    <property type="RefSeq nucleotide sequence ID" value="NM_001136486.2"/>
    <property type="RefSeq protein sequence ID" value="NP_001129958.1"/>
</dbReference>
<dbReference type="UCSC" id="uc010rty.3">
    <property type="organism name" value="human"/>
</dbReference>
<dbReference type="AGR" id="HGNC:14663"/>
<dbReference type="CTD" id="120146"/>
<dbReference type="GeneCards" id="TRIM64"/>
<dbReference type="HGNC" id="HGNC:14663">
    <property type="gene designation" value="TRIM64"/>
</dbReference>
<dbReference type="HPA" id="ENSG00000204450">
    <property type="expression patterns" value="Tissue enriched (placenta)"/>
</dbReference>
<dbReference type="neXtProt" id="NX_A6NGJ6"/>
<dbReference type="PharmGKB" id="PA25492"/>
<dbReference type="VEuPathDB" id="HostDB:ENSG00000204450"/>
<dbReference type="eggNOG" id="KOG2177">
    <property type="taxonomic scope" value="Eukaryota"/>
</dbReference>
<dbReference type="GeneTree" id="ENSGT00940000163440"/>
<dbReference type="HOGENOM" id="CLU_013137_0_3_1"/>
<dbReference type="InParanoid" id="A6NGJ6"/>
<dbReference type="OMA" id="TEICHRA"/>
<dbReference type="OrthoDB" id="9521923at2759"/>
<dbReference type="PAN-GO" id="A6NGJ6">
    <property type="GO annotations" value="5 GO annotations based on evolutionary models"/>
</dbReference>
<dbReference type="PhylomeDB" id="A6NGJ6"/>
<dbReference type="PathwayCommons" id="A6NGJ6"/>
<dbReference type="SIGNOR" id="A6NGJ6"/>
<dbReference type="BioGRID-ORCS" id="120146">
    <property type="hits" value="13 hits in 230 CRISPR screens"/>
</dbReference>
<dbReference type="GenomeRNAi" id="120146"/>
<dbReference type="Pharos" id="A6NGJ6">
    <property type="development level" value="Tdark"/>
</dbReference>
<dbReference type="PRO" id="PR:A6NGJ6"/>
<dbReference type="Proteomes" id="UP000005640">
    <property type="component" value="Chromosome 11"/>
</dbReference>
<dbReference type="RNAct" id="A6NGJ6">
    <property type="molecule type" value="protein"/>
</dbReference>
<dbReference type="Bgee" id="ENSG00000204450">
    <property type="expression patterns" value="Expressed in placenta and 2 other cell types or tissues"/>
</dbReference>
<dbReference type="GO" id="GO:0005737">
    <property type="term" value="C:cytoplasm"/>
    <property type="evidence" value="ECO:0000318"/>
    <property type="project" value="GO_Central"/>
</dbReference>
<dbReference type="GO" id="GO:0061630">
    <property type="term" value="F:ubiquitin protein ligase activity"/>
    <property type="evidence" value="ECO:0000318"/>
    <property type="project" value="GO_Central"/>
</dbReference>
<dbReference type="GO" id="GO:0008270">
    <property type="term" value="F:zinc ion binding"/>
    <property type="evidence" value="ECO:0007669"/>
    <property type="project" value="UniProtKB-KW"/>
</dbReference>
<dbReference type="GO" id="GO:0045087">
    <property type="term" value="P:innate immune response"/>
    <property type="evidence" value="ECO:0000318"/>
    <property type="project" value="GO_Central"/>
</dbReference>
<dbReference type="GO" id="GO:0010468">
    <property type="term" value="P:regulation of gene expression"/>
    <property type="evidence" value="ECO:0000318"/>
    <property type="project" value="GO_Central"/>
</dbReference>
<dbReference type="CDD" id="cd19783">
    <property type="entry name" value="Bbox2_TRIM43-like"/>
    <property type="match status" value="1"/>
</dbReference>
<dbReference type="CDD" id="cd16603">
    <property type="entry name" value="RING-HC_TRIM43-like_C-IV"/>
    <property type="match status" value="1"/>
</dbReference>
<dbReference type="Gene3D" id="2.60.120.920">
    <property type="match status" value="1"/>
</dbReference>
<dbReference type="Gene3D" id="3.30.160.60">
    <property type="entry name" value="Classic Zinc Finger"/>
    <property type="match status" value="1"/>
</dbReference>
<dbReference type="Gene3D" id="3.30.40.10">
    <property type="entry name" value="Zinc/RING finger domain, C3HC4 (zinc finger)"/>
    <property type="match status" value="1"/>
</dbReference>
<dbReference type="InterPro" id="IPR001870">
    <property type="entry name" value="B30.2/SPRY"/>
</dbReference>
<dbReference type="InterPro" id="IPR043136">
    <property type="entry name" value="B30.2/SPRY_sf"/>
</dbReference>
<dbReference type="InterPro" id="IPR003879">
    <property type="entry name" value="Butyrophylin_SPRY"/>
</dbReference>
<dbReference type="InterPro" id="IPR013320">
    <property type="entry name" value="ConA-like_dom_sf"/>
</dbReference>
<dbReference type="InterPro" id="IPR003877">
    <property type="entry name" value="SPRY_dom"/>
</dbReference>
<dbReference type="InterPro" id="IPR050143">
    <property type="entry name" value="TRIM/RBCC"/>
</dbReference>
<dbReference type="InterPro" id="IPR000315">
    <property type="entry name" value="Znf_B-box"/>
</dbReference>
<dbReference type="InterPro" id="IPR018957">
    <property type="entry name" value="Znf_C3HC4_RING-type"/>
</dbReference>
<dbReference type="InterPro" id="IPR001841">
    <property type="entry name" value="Znf_RING"/>
</dbReference>
<dbReference type="InterPro" id="IPR013083">
    <property type="entry name" value="Znf_RING/FYVE/PHD"/>
</dbReference>
<dbReference type="InterPro" id="IPR017907">
    <property type="entry name" value="Znf_RING_CS"/>
</dbReference>
<dbReference type="PANTHER" id="PTHR24103">
    <property type="entry name" value="E3 UBIQUITIN-PROTEIN LIGASE TRIM"/>
    <property type="match status" value="1"/>
</dbReference>
<dbReference type="Pfam" id="PF00622">
    <property type="entry name" value="SPRY"/>
    <property type="match status" value="1"/>
</dbReference>
<dbReference type="Pfam" id="PF00643">
    <property type="entry name" value="zf-B_box"/>
    <property type="match status" value="1"/>
</dbReference>
<dbReference type="Pfam" id="PF00097">
    <property type="entry name" value="zf-C3HC4"/>
    <property type="match status" value="1"/>
</dbReference>
<dbReference type="PRINTS" id="PR01407">
    <property type="entry name" value="BUTYPHLNCDUF"/>
</dbReference>
<dbReference type="SMART" id="SM00336">
    <property type="entry name" value="BBOX"/>
    <property type="match status" value="1"/>
</dbReference>
<dbReference type="SMART" id="SM00184">
    <property type="entry name" value="RING"/>
    <property type="match status" value="1"/>
</dbReference>
<dbReference type="SMART" id="SM00449">
    <property type="entry name" value="SPRY"/>
    <property type="match status" value="1"/>
</dbReference>
<dbReference type="SUPFAM" id="SSF57845">
    <property type="entry name" value="B-box zinc-binding domain"/>
    <property type="match status" value="1"/>
</dbReference>
<dbReference type="SUPFAM" id="SSF49899">
    <property type="entry name" value="Concanavalin A-like lectins/glucanases"/>
    <property type="match status" value="1"/>
</dbReference>
<dbReference type="SUPFAM" id="SSF57850">
    <property type="entry name" value="RING/U-box"/>
    <property type="match status" value="1"/>
</dbReference>
<dbReference type="PROSITE" id="PS50188">
    <property type="entry name" value="B302_SPRY"/>
    <property type="match status" value="1"/>
</dbReference>
<dbReference type="PROSITE" id="PS50119">
    <property type="entry name" value="ZF_BBOX"/>
    <property type="match status" value="1"/>
</dbReference>
<dbReference type="PROSITE" id="PS00518">
    <property type="entry name" value="ZF_RING_1"/>
    <property type="match status" value="1"/>
</dbReference>
<dbReference type="PROSITE" id="PS50089">
    <property type="entry name" value="ZF_RING_2"/>
    <property type="match status" value="1"/>
</dbReference>
<gene>
    <name type="primary">TRIM64</name>
    <name type="synonym">C11orf28</name>
</gene>
<keyword id="KW-0175">Coiled coil</keyword>
<keyword id="KW-0479">Metal-binding</keyword>
<keyword id="KW-1185">Reference proteome</keyword>
<keyword id="KW-0862">Zinc</keyword>
<keyword id="KW-0863">Zinc-finger</keyword>
<protein>
    <recommendedName>
        <fullName>Tripartite motif-containing protein 64</fullName>
    </recommendedName>
</protein>
<evidence type="ECO:0000255" key="1"/>
<evidence type="ECO:0000255" key="2">
    <source>
        <dbReference type="PROSITE-ProRule" id="PRU00024"/>
    </source>
</evidence>
<evidence type="ECO:0000255" key="3">
    <source>
        <dbReference type="PROSITE-ProRule" id="PRU00175"/>
    </source>
</evidence>
<evidence type="ECO:0000255" key="4">
    <source>
        <dbReference type="PROSITE-ProRule" id="PRU00548"/>
    </source>
</evidence>
<evidence type="ECO:0000305" key="5"/>
<name>TRI64_HUMAN</name>